<reference key="1">
    <citation type="journal article" date="1998" name="J. Bacteriol.">
        <title>A chaperone in the HSP70 family controls production of extracellular fibrils in Myxococcus xanthus.</title>
        <authorList>
            <person name="Weimer R.M."/>
            <person name="Creighton C.X."/>
            <person name="Stassinopoulos A."/>
            <person name="Youderian P."/>
            <person name="Hartzell P.L."/>
        </authorList>
    </citation>
    <scope>NUCLEOTIDE SEQUENCE [GENOMIC DNA]</scope>
</reference>
<reference key="2">
    <citation type="journal article" date="2006" name="Proc. Natl. Acad. Sci. U.S.A.">
        <title>Evolution of sensory complexity recorded in a myxobacterial genome.</title>
        <authorList>
            <person name="Goldman B.S."/>
            <person name="Nierman W.C."/>
            <person name="Kaiser D."/>
            <person name="Slater S.C."/>
            <person name="Durkin A.S."/>
            <person name="Eisen J.A."/>
            <person name="Ronning C.M."/>
            <person name="Barbazuk W.B."/>
            <person name="Blanchard M."/>
            <person name="Field C."/>
            <person name="Halling C."/>
            <person name="Hinkle G."/>
            <person name="Iartchuk O."/>
            <person name="Kim H.S."/>
            <person name="Mackenzie C."/>
            <person name="Madupu R."/>
            <person name="Miller N."/>
            <person name="Shvartsbeyn A."/>
            <person name="Sullivan S.A."/>
            <person name="Vaudin M."/>
            <person name="Wiegand R."/>
            <person name="Kaplan H.B."/>
        </authorList>
    </citation>
    <scope>NUCLEOTIDE SEQUENCE [LARGE SCALE GENOMIC DNA]</scope>
    <source>
        <strain>DK1622</strain>
    </source>
</reference>
<name>DNAK_MYXXD</name>
<protein>
    <recommendedName>
        <fullName>Chaperone protein DnaK</fullName>
    </recommendedName>
    <alternativeName>
        <fullName>HSP70</fullName>
    </alternativeName>
    <alternativeName>
        <fullName>Heat shock 70 kDa protein</fullName>
    </alternativeName>
    <alternativeName>
        <fullName>Heat shock protein 70</fullName>
    </alternativeName>
</protein>
<dbReference type="EMBL" id="U83800">
    <property type="protein sequence ID" value="AAC64205.1"/>
    <property type="molecule type" value="Genomic_DNA"/>
</dbReference>
<dbReference type="EMBL" id="CP000113">
    <property type="protein sequence ID" value="ABF90084.1"/>
    <property type="molecule type" value="Genomic_DNA"/>
</dbReference>
<dbReference type="RefSeq" id="WP_011556596.1">
    <property type="nucleotide sequence ID" value="NC_008095.1"/>
</dbReference>
<dbReference type="SMR" id="P95334"/>
<dbReference type="STRING" id="246197.MXAN_6671"/>
<dbReference type="EnsemblBacteria" id="ABF90084">
    <property type="protein sequence ID" value="ABF90084"/>
    <property type="gene ID" value="MXAN_6671"/>
</dbReference>
<dbReference type="GeneID" id="41363869"/>
<dbReference type="KEGG" id="mxa:MXAN_6671"/>
<dbReference type="eggNOG" id="COG0443">
    <property type="taxonomic scope" value="Bacteria"/>
</dbReference>
<dbReference type="HOGENOM" id="CLU_005965_2_1_7"/>
<dbReference type="OrthoDB" id="9766019at2"/>
<dbReference type="Proteomes" id="UP000002402">
    <property type="component" value="Chromosome"/>
</dbReference>
<dbReference type="GO" id="GO:0005524">
    <property type="term" value="F:ATP binding"/>
    <property type="evidence" value="ECO:0007669"/>
    <property type="project" value="UniProtKB-UniRule"/>
</dbReference>
<dbReference type="GO" id="GO:0140662">
    <property type="term" value="F:ATP-dependent protein folding chaperone"/>
    <property type="evidence" value="ECO:0007669"/>
    <property type="project" value="InterPro"/>
</dbReference>
<dbReference type="GO" id="GO:0051082">
    <property type="term" value="F:unfolded protein binding"/>
    <property type="evidence" value="ECO:0007669"/>
    <property type="project" value="InterPro"/>
</dbReference>
<dbReference type="CDD" id="cd10234">
    <property type="entry name" value="ASKHA_NBD_HSP70_DnaK-like"/>
    <property type="match status" value="1"/>
</dbReference>
<dbReference type="FunFam" id="2.60.34.10:FF:000014">
    <property type="entry name" value="Chaperone protein DnaK HSP70"/>
    <property type="match status" value="1"/>
</dbReference>
<dbReference type="FunFam" id="3.30.30.30:FF:000005">
    <property type="entry name" value="Heat shock protein ssb1"/>
    <property type="match status" value="1"/>
</dbReference>
<dbReference type="FunFam" id="1.20.1270.10:FF:000001">
    <property type="entry name" value="Molecular chaperone DnaK"/>
    <property type="match status" value="1"/>
</dbReference>
<dbReference type="FunFam" id="3.30.420.40:FF:000004">
    <property type="entry name" value="Molecular chaperone DnaK"/>
    <property type="match status" value="1"/>
</dbReference>
<dbReference type="FunFam" id="3.90.640.10:FF:000003">
    <property type="entry name" value="Molecular chaperone DnaK"/>
    <property type="match status" value="1"/>
</dbReference>
<dbReference type="Gene3D" id="1.20.1270.10">
    <property type="match status" value="1"/>
</dbReference>
<dbReference type="Gene3D" id="3.30.420.40">
    <property type="match status" value="2"/>
</dbReference>
<dbReference type="Gene3D" id="3.90.640.10">
    <property type="entry name" value="Actin, Chain A, domain 4"/>
    <property type="match status" value="1"/>
</dbReference>
<dbReference type="Gene3D" id="2.60.34.10">
    <property type="entry name" value="Substrate Binding Domain Of DNAk, Chain A, domain 1"/>
    <property type="match status" value="1"/>
</dbReference>
<dbReference type="HAMAP" id="MF_00332">
    <property type="entry name" value="DnaK"/>
    <property type="match status" value="1"/>
</dbReference>
<dbReference type="InterPro" id="IPR043129">
    <property type="entry name" value="ATPase_NBD"/>
</dbReference>
<dbReference type="InterPro" id="IPR012725">
    <property type="entry name" value="Chaperone_DnaK"/>
</dbReference>
<dbReference type="InterPro" id="IPR018181">
    <property type="entry name" value="Heat_shock_70_CS"/>
</dbReference>
<dbReference type="InterPro" id="IPR029048">
    <property type="entry name" value="HSP70_C_sf"/>
</dbReference>
<dbReference type="InterPro" id="IPR029047">
    <property type="entry name" value="HSP70_peptide-bd_sf"/>
</dbReference>
<dbReference type="InterPro" id="IPR013126">
    <property type="entry name" value="Hsp_70_fam"/>
</dbReference>
<dbReference type="NCBIfam" id="NF001413">
    <property type="entry name" value="PRK00290.1"/>
    <property type="match status" value="1"/>
</dbReference>
<dbReference type="NCBIfam" id="NF003520">
    <property type="entry name" value="PRK05183.1"/>
    <property type="match status" value="1"/>
</dbReference>
<dbReference type="NCBIfam" id="TIGR02350">
    <property type="entry name" value="prok_dnaK"/>
    <property type="match status" value="1"/>
</dbReference>
<dbReference type="PANTHER" id="PTHR19375">
    <property type="entry name" value="HEAT SHOCK PROTEIN 70KDA"/>
    <property type="match status" value="1"/>
</dbReference>
<dbReference type="Pfam" id="PF00012">
    <property type="entry name" value="HSP70"/>
    <property type="match status" value="1"/>
</dbReference>
<dbReference type="PRINTS" id="PR00301">
    <property type="entry name" value="HEATSHOCK70"/>
</dbReference>
<dbReference type="SUPFAM" id="SSF53067">
    <property type="entry name" value="Actin-like ATPase domain"/>
    <property type="match status" value="2"/>
</dbReference>
<dbReference type="SUPFAM" id="SSF100934">
    <property type="entry name" value="Heat shock protein 70kD (HSP70), C-terminal subdomain"/>
    <property type="match status" value="1"/>
</dbReference>
<dbReference type="SUPFAM" id="SSF100920">
    <property type="entry name" value="Heat shock protein 70kD (HSP70), peptide-binding domain"/>
    <property type="match status" value="1"/>
</dbReference>
<dbReference type="PROSITE" id="PS00297">
    <property type="entry name" value="HSP70_1"/>
    <property type="match status" value="1"/>
</dbReference>
<dbReference type="PROSITE" id="PS00329">
    <property type="entry name" value="HSP70_2"/>
    <property type="match status" value="1"/>
</dbReference>
<dbReference type="PROSITE" id="PS01036">
    <property type="entry name" value="HSP70_3"/>
    <property type="match status" value="1"/>
</dbReference>
<feature type="chain" id="PRO_0000078501" description="Chaperone protein DnaK">
    <location>
        <begin position="1"/>
        <end position="607"/>
    </location>
</feature>
<feature type="modified residue" description="Phosphothreonine; by autocatalysis" evidence="1">
    <location>
        <position position="201"/>
    </location>
</feature>
<feature type="sequence conflict" description="In Ref. 1; AAC64205." evidence="2" ref="1">
    <original>K</original>
    <variation>N</variation>
    <location>
        <position position="353"/>
    </location>
</feature>
<sequence length="607" mass="65348">MGKVIGIDLGTTNSCVAVMEGGEPVVIPNSEGSRTTPSMVGFTDSGERLVGQIAKRQAITNPENTVFAAKRLIGRKFDSPEGKKAIGVSPFKVASSPNGDAWVEIRGKGYSPPEVSAIVLMKMKQTAEDYLGEQVSEAVITVPAYFNDSQRQATKDAGRIAGLSVLRIINEPTAAALAYGLDKVQDGGTERIAVYDLGGGTFDISILELNAGVFEVKSTNGDTFLGGEDFDQRLIDYLAKRFAESNNGLDLRKDRMALQRLKEAAERAKHELSSAPETEVNLPFITADASGPKHLTETVDRATFEALVTDLIDRTIEPCRIALKDAGIPAQQINQVLLVGGMTRMPRVQQKVKEFFGREPHKGINPDEVVAVGAAIQGGVLKGEVKDVLLLDVTPLSLGVETAGGVFTKIIDKNTTIPCKKSQVFSTAVDNQPLVSVHVLQGEREMAADNKTLARFELVGIPPAPRGVPQIEVSFDIDANGIVHVSAKDLGTGKVQQVRVVSNSGLSEAEIQAMISDAQSHASDDKKKKELAELRNNADGLIYTTEKSLEEYASLLSEKDREEIKADLERLKEVLNTSDAAVLKESFQRLEGSAYRIADAIYTGQAS</sequence>
<organism>
    <name type="scientific">Myxococcus xanthus (strain DK1622)</name>
    <dbReference type="NCBI Taxonomy" id="246197"/>
    <lineage>
        <taxon>Bacteria</taxon>
        <taxon>Pseudomonadati</taxon>
        <taxon>Myxococcota</taxon>
        <taxon>Myxococcia</taxon>
        <taxon>Myxococcales</taxon>
        <taxon>Cystobacterineae</taxon>
        <taxon>Myxococcaceae</taxon>
        <taxon>Myxococcus</taxon>
    </lineage>
</organism>
<keyword id="KW-0067">ATP-binding</keyword>
<keyword id="KW-0143">Chaperone</keyword>
<keyword id="KW-0547">Nucleotide-binding</keyword>
<keyword id="KW-0597">Phosphoprotein</keyword>
<keyword id="KW-1185">Reference proteome</keyword>
<keyword id="KW-0346">Stress response</keyword>
<gene>
    <name type="primary">dnaK</name>
    <name type="synonym">sglK</name>
    <name type="ordered locus">MXAN_6671</name>
</gene>
<comment type="function">
    <text>Potential chaperone for other proteins involved in social motility.</text>
</comment>
<comment type="induction">
    <text evidence="1">By stress conditions e.g. heat shock (By similarity).</text>
</comment>
<comment type="similarity">
    <text evidence="2">Belongs to the heat shock protein 70 family.</text>
</comment>
<proteinExistence type="inferred from homology"/>
<accession>P95334</accession>
<accession>Q1CXT5</accession>
<evidence type="ECO:0000250" key="1"/>
<evidence type="ECO:0000305" key="2"/>